<protein>
    <recommendedName>
        <fullName evidence="8">Serine/threonine-protein kinase Nek6</fullName>
        <ecNumber evidence="6">2.7.11.34</ecNumber>
    </recommendedName>
    <alternativeName>
        <fullName>Never in mitosis A-related kinase 6</fullName>
        <shortName>NimA-related protein kinase 6</shortName>
    </alternativeName>
</protein>
<feature type="chain" id="PRO_0000086429" description="Serine/threonine-protein kinase Nek6">
    <location>
        <begin position="1"/>
        <end position="313"/>
    </location>
</feature>
<feature type="domain" description="Protein kinase" evidence="3">
    <location>
        <begin position="45"/>
        <end position="310"/>
    </location>
</feature>
<feature type="region of interest" description="Interaction with ARHGAP33, ANKRA2, CDC42, PRDX3, RAD26L, RBBP6, RPS7 and TRIP4" evidence="1">
    <location>
        <begin position="1"/>
        <end position="44"/>
    </location>
</feature>
<feature type="region of interest" description="Disordered" evidence="5">
    <location>
        <begin position="1"/>
        <end position="31"/>
    </location>
</feature>
<feature type="region of interest" description="Interaction with APBB1" evidence="1">
    <location>
        <begin position="267"/>
        <end position="270"/>
    </location>
</feature>
<feature type="active site" description="Proton acceptor" evidence="3 4">
    <location>
        <position position="172"/>
    </location>
</feature>
<feature type="binding site" evidence="3">
    <location>
        <begin position="51"/>
        <end position="59"/>
    </location>
    <ligand>
        <name>ATP</name>
        <dbReference type="ChEBI" id="CHEBI:30616"/>
    </ligand>
</feature>
<feature type="binding site" evidence="3">
    <location>
        <position position="74"/>
    </location>
    <ligand>
        <name>ATP</name>
        <dbReference type="ChEBI" id="CHEBI:30616"/>
    </ligand>
</feature>
<feature type="site" description="Autoinhibitory" evidence="1">
    <location>
        <position position="108"/>
    </location>
</feature>
<feature type="modified residue" description="Phosphoserine" evidence="2">
    <location>
        <position position="37"/>
    </location>
</feature>
<feature type="modified residue" description="Phosphothreonine" evidence="2">
    <location>
        <position position="202"/>
    </location>
</feature>
<feature type="modified residue" description="Phosphoserine; by NEK9" evidence="2">
    <location>
        <position position="206"/>
    </location>
</feature>
<feature type="modified residue" description="Phosphothreonine" evidence="2">
    <location>
        <position position="210"/>
    </location>
</feature>
<proteinExistence type="evidence at protein level"/>
<name>NEK6_RAT</name>
<sequence length="313" mass="35835">MAGQPSHMPHGGSPNHLCHVLGPAHPPDPQRHPNTLSFRCSLADFQIEKKIGRGQFSEVYKATCLLDRKTVALKKVQIFEMMDAKARQDCVKEIGLLKQLNHPNIIKYLDSFIEDNELNIVLELADAGDLSQMIKYFKKQKRLIPERTVWKYFVQLCSAVEHMHSRRVMHRDIKPANVFITATGIVKLGDLGLGRFFSSETTAAHSLVGTPYYMSPERIHENGYNFKSDIWSLGCLLYEMAALQSPFYGDKMNLFSLCQKIEQCDYPPLPGEHYSEKLRELVSMCIYPDPNHRPDIEYVHQVAKQMHVWTSST</sequence>
<organism>
    <name type="scientific">Rattus norvegicus</name>
    <name type="common">Rat</name>
    <dbReference type="NCBI Taxonomy" id="10116"/>
    <lineage>
        <taxon>Eukaryota</taxon>
        <taxon>Metazoa</taxon>
        <taxon>Chordata</taxon>
        <taxon>Craniata</taxon>
        <taxon>Vertebrata</taxon>
        <taxon>Euteleostomi</taxon>
        <taxon>Mammalia</taxon>
        <taxon>Eutheria</taxon>
        <taxon>Euarchontoglires</taxon>
        <taxon>Glires</taxon>
        <taxon>Rodentia</taxon>
        <taxon>Myomorpha</taxon>
        <taxon>Muroidea</taxon>
        <taxon>Muridae</taxon>
        <taxon>Murinae</taxon>
        <taxon>Rattus</taxon>
    </lineage>
</organism>
<comment type="function">
    <text evidence="2 6">Protein kinase which plays an important role in mitotic cell cycle progression. Required for chromosome segregation at metaphase-anaphase transition, robust mitotic spindle formation and cytokinesis. Phosphorylates ATF4, CIR1, PTN, RAD26L, RBBP6, RPS7, TRIP4, STAT3 and histones H1 and H3. Phosphorylates KIF11 to promote mitotic spindle formation. Involved in G2/M phase cell cycle arrest induced by DNA damage. Inhibition of activity results in apoptosis. May contribute to tumorigenesis by suppressing p53/TP53-induced cancer cell senescence (By similarity). Phosphorylates RPS6KB1 (PubMed:11516946). Phosphorylates EML4 at 'Ser-144', promoting its dissociation from microtubules during mitosis which is required for efficient chromosome congression (By similarity).</text>
</comment>
<comment type="catalytic activity">
    <reaction evidence="8">
        <text>L-seryl-[protein] + ATP = O-phospho-L-seryl-[protein] + ADP + H(+)</text>
        <dbReference type="Rhea" id="RHEA:17989"/>
        <dbReference type="Rhea" id="RHEA-COMP:9863"/>
        <dbReference type="Rhea" id="RHEA-COMP:11604"/>
        <dbReference type="ChEBI" id="CHEBI:15378"/>
        <dbReference type="ChEBI" id="CHEBI:29999"/>
        <dbReference type="ChEBI" id="CHEBI:30616"/>
        <dbReference type="ChEBI" id="CHEBI:83421"/>
        <dbReference type="ChEBI" id="CHEBI:456216"/>
        <dbReference type="EC" id="2.7.11.34"/>
    </reaction>
</comment>
<comment type="catalytic activity">
    <reaction evidence="6">
        <text>L-threonyl-[protein] + ATP = O-phospho-L-threonyl-[protein] + ADP + H(+)</text>
        <dbReference type="Rhea" id="RHEA:46608"/>
        <dbReference type="Rhea" id="RHEA-COMP:11060"/>
        <dbReference type="Rhea" id="RHEA-COMP:11605"/>
        <dbReference type="ChEBI" id="CHEBI:15378"/>
        <dbReference type="ChEBI" id="CHEBI:30013"/>
        <dbReference type="ChEBI" id="CHEBI:30616"/>
        <dbReference type="ChEBI" id="CHEBI:61977"/>
        <dbReference type="ChEBI" id="CHEBI:456216"/>
        <dbReference type="EC" id="2.7.11.34"/>
    </reaction>
</comment>
<comment type="cofactor">
    <cofactor evidence="2">
        <name>Mg(2+)</name>
        <dbReference type="ChEBI" id="CHEBI:18420"/>
    </cofactor>
</comment>
<comment type="activity regulation">
    <text evidence="1">Binding to NEK9 stimulates its activity by releasing the autoinhibitory function of Tyr-108.</text>
</comment>
<comment type="subunit">
    <text evidence="1">Interacts with NEK9, predominantly in mitosis. Interacts with KIF11 (via C-terminus). Interacts with APBB1 (via WW domain). Interacts with ANKRA2, ATF4, ARHGAP33, CDC42, CIR1, PRAM1, PTN, PRDX3, PIN1, RAD26L, RBBP6, RPS7, STAT3 and TRIP4 (By similarity). Interacts with RPS6KB1.</text>
</comment>
<comment type="subcellular location">
    <subcellularLocation>
        <location evidence="1">Cytoplasm</location>
    </subcellularLocation>
    <subcellularLocation>
        <location evidence="1">Nucleus</location>
    </subcellularLocation>
    <subcellularLocation>
        <location evidence="1">Nucleus speckle</location>
    </subcellularLocation>
    <subcellularLocation>
        <location evidence="1">Cytoplasm</location>
        <location evidence="1">Cytoskeleton</location>
        <location evidence="1">Microtubule organizing center</location>
        <location evidence="1">Centrosome</location>
    </subcellularLocation>
    <subcellularLocation>
        <location evidence="1">Cytoplasm</location>
        <location evidence="1">Cytoskeleton</location>
        <location evidence="1">Spindle pole</location>
    </subcellularLocation>
    <text evidence="1">Colocalizes with APBB1 at the nuclear speckles. Colocalizes with PIN1 in the nucleus. Colocalizes with ATF4, CIR1, ARHGAP33, ANKRA2, CDC42, NEK9, RAD26L, RBBP6, RPS7, TRIP4, RELB and PHF1 in the centrosome. Localizes to spindle microtubules in metaphase and anaphase and to the midbody during cytokinesis (By similarity).</text>
</comment>
<comment type="domain">
    <text evidence="1">Displays an autoinhibited conformation: Tyr-108 side chain points into the active site, interacts with the activation loop, and blocks the alphaC helix. The autoinhibitory conformation is released upon binding with NEK9 (By similarity).</text>
</comment>
<comment type="PTM">
    <text evidence="1">Autophosphorylated. Phosphorylation at Ser-206 is required for its activation. Phosphorylated upon IR or UV-induced DNA damage. Phosphorylated by CHEK1 and CHEK2. Interaction with APBB1 down-regulates phosphorylation at Thr-210 (By similarity).</text>
</comment>
<comment type="similarity">
    <text evidence="7">Belongs to the protein kinase superfamily. NEK Ser/Thr protein kinase family. NIMA subfamily.</text>
</comment>
<evidence type="ECO:0000250" key="1"/>
<evidence type="ECO:0000250" key="2">
    <source>
        <dbReference type="UniProtKB" id="Q9HC98"/>
    </source>
</evidence>
<evidence type="ECO:0000255" key="3">
    <source>
        <dbReference type="PROSITE-ProRule" id="PRU00159"/>
    </source>
</evidence>
<evidence type="ECO:0000255" key="4">
    <source>
        <dbReference type="PROSITE-ProRule" id="PRU10027"/>
    </source>
</evidence>
<evidence type="ECO:0000256" key="5">
    <source>
        <dbReference type="SAM" id="MobiDB-lite"/>
    </source>
</evidence>
<evidence type="ECO:0000269" key="6">
    <source>
    </source>
</evidence>
<evidence type="ECO:0000305" key="7"/>
<evidence type="ECO:0000305" key="8">
    <source>
    </source>
</evidence>
<dbReference type="EC" id="2.7.11.34" evidence="6"/>
<dbReference type="EMBL" id="AY334013">
    <property type="protein sequence ID" value="AAP97428.1"/>
    <property type="molecule type" value="mRNA"/>
</dbReference>
<dbReference type="RefSeq" id="NP_001264161.1">
    <property type="nucleotide sequence ID" value="NM_001277232.1"/>
</dbReference>
<dbReference type="RefSeq" id="NP_891998.1">
    <property type="nucleotide sequence ID" value="NM_182953.2"/>
</dbReference>
<dbReference type="RefSeq" id="XP_006234162.1">
    <property type="nucleotide sequence ID" value="XM_006234100.3"/>
</dbReference>
<dbReference type="RefSeq" id="XP_017447355.1">
    <property type="nucleotide sequence ID" value="XM_017591866.3"/>
</dbReference>
<dbReference type="RefSeq" id="XP_038961262.1">
    <property type="nucleotide sequence ID" value="XM_039105334.2"/>
</dbReference>
<dbReference type="RefSeq" id="XP_038961263.1">
    <property type="nucleotide sequence ID" value="XM_039105335.2"/>
</dbReference>
<dbReference type="RefSeq" id="XP_038961264.1">
    <property type="nucleotide sequence ID" value="XM_039105336.2"/>
</dbReference>
<dbReference type="RefSeq" id="XP_038961265.1">
    <property type="nucleotide sequence ID" value="XM_039105337.2"/>
</dbReference>
<dbReference type="SMR" id="P59895"/>
<dbReference type="FunCoup" id="P59895">
    <property type="interactions" value="915"/>
</dbReference>
<dbReference type="STRING" id="10116.ENSRNOP00000069207"/>
<dbReference type="iPTMnet" id="P59895"/>
<dbReference type="PhosphoSitePlus" id="P59895"/>
<dbReference type="PaxDb" id="10116-ENSRNOP00000014631"/>
<dbReference type="Ensembl" id="ENSRNOT00000116855.1">
    <property type="protein sequence ID" value="ENSRNOP00000083098.1"/>
    <property type="gene ID" value="ENSRNOG00000010897.7"/>
</dbReference>
<dbReference type="GeneID" id="360161"/>
<dbReference type="KEGG" id="rno:360161"/>
<dbReference type="UCSC" id="RGD:727779">
    <property type="organism name" value="rat"/>
</dbReference>
<dbReference type="AGR" id="RGD:727779"/>
<dbReference type="CTD" id="10783"/>
<dbReference type="RGD" id="727779">
    <property type="gene designation" value="Nek6"/>
</dbReference>
<dbReference type="eggNOG" id="KOG0591">
    <property type="taxonomic scope" value="Eukaryota"/>
</dbReference>
<dbReference type="GeneTree" id="ENSGT00940000159990"/>
<dbReference type="InParanoid" id="P59895"/>
<dbReference type="OrthoDB" id="4951at9989"/>
<dbReference type="PhylomeDB" id="P59895"/>
<dbReference type="TreeFam" id="TF105135"/>
<dbReference type="PRO" id="PR:P59895"/>
<dbReference type="Proteomes" id="UP000002494">
    <property type="component" value="Chromosome 3"/>
</dbReference>
<dbReference type="Bgee" id="ENSRNOG00000010897">
    <property type="expression patterns" value="Expressed in jejunum and 20 other cell types or tissues"/>
</dbReference>
<dbReference type="ExpressionAtlas" id="P59895">
    <property type="expression patterns" value="baseline and differential"/>
</dbReference>
<dbReference type="GO" id="GO:0005813">
    <property type="term" value="C:centrosome"/>
    <property type="evidence" value="ECO:0000266"/>
    <property type="project" value="RGD"/>
</dbReference>
<dbReference type="GO" id="GO:0005737">
    <property type="term" value="C:cytoplasm"/>
    <property type="evidence" value="ECO:0000250"/>
    <property type="project" value="UniProtKB"/>
</dbReference>
<dbReference type="GO" id="GO:0016607">
    <property type="term" value="C:nuclear speck"/>
    <property type="evidence" value="ECO:0007669"/>
    <property type="project" value="UniProtKB-SubCell"/>
</dbReference>
<dbReference type="GO" id="GO:0005634">
    <property type="term" value="C:nucleus"/>
    <property type="evidence" value="ECO:0000266"/>
    <property type="project" value="RGD"/>
</dbReference>
<dbReference type="GO" id="GO:0032991">
    <property type="term" value="C:protein-containing complex"/>
    <property type="evidence" value="ECO:0000266"/>
    <property type="project" value="RGD"/>
</dbReference>
<dbReference type="GO" id="GO:0000922">
    <property type="term" value="C:spindle pole"/>
    <property type="evidence" value="ECO:0007669"/>
    <property type="project" value="UniProtKB-SubCell"/>
</dbReference>
<dbReference type="GO" id="GO:0005524">
    <property type="term" value="F:ATP binding"/>
    <property type="evidence" value="ECO:0000250"/>
    <property type="project" value="UniProtKB"/>
</dbReference>
<dbReference type="GO" id="GO:0140297">
    <property type="term" value="F:DNA-binding transcription factor binding"/>
    <property type="evidence" value="ECO:0000266"/>
    <property type="project" value="RGD"/>
</dbReference>
<dbReference type="GO" id="GO:0019894">
    <property type="term" value="F:kinesin binding"/>
    <property type="evidence" value="ECO:0000266"/>
    <property type="project" value="RGD"/>
</dbReference>
<dbReference type="GO" id="GO:0000287">
    <property type="term" value="F:magnesium ion binding"/>
    <property type="evidence" value="ECO:0000250"/>
    <property type="project" value="UniProtKB"/>
</dbReference>
<dbReference type="GO" id="GO:0019901">
    <property type="term" value="F:protein kinase binding"/>
    <property type="evidence" value="ECO:0000250"/>
    <property type="project" value="UniProtKB"/>
</dbReference>
<dbReference type="GO" id="GO:0106310">
    <property type="term" value="F:protein serine kinase activity"/>
    <property type="evidence" value="ECO:0007669"/>
    <property type="project" value="RHEA"/>
</dbReference>
<dbReference type="GO" id="GO:0004674">
    <property type="term" value="F:protein serine/threonine kinase activity"/>
    <property type="evidence" value="ECO:0000314"/>
    <property type="project" value="UniProtKB"/>
</dbReference>
<dbReference type="GO" id="GO:0001222">
    <property type="term" value="F:transcription corepressor binding"/>
    <property type="evidence" value="ECO:0000266"/>
    <property type="project" value="RGD"/>
</dbReference>
<dbReference type="GO" id="GO:0031625">
    <property type="term" value="F:ubiquitin protein ligase binding"/>
    <property type="evidence" value="ECO:0000266"/>
    <property type="project" value="RGD"/>
</dbReference>
<dbReference type="GO" id="GO:0006915">
    <property type="term" value="P:apoptotic process"/>
    <property type="evidence" value="ECO:0007669"/>
    <property type="project" value="UniProtKB-KW"/>
</dbReference>
<dbReference type="GO" id="GO:0051301">
    <property type="term" value="P:cell division"/>
    <property type="evidence" value="ECO:0007669"/>
    <property type="project" value="UniProtKB-KW"/>
</dbReference>
<dbReference type="GO" id="GO:0007059">
    <property type="term" value="P:chromosome segregation"/>
    <property type="evidence" value="ECO:0000250"/>
    <property type="project" value="UniProtKB"/>
</dbReference>
<dbReference type="GO" id="GO:0046777">
    <property type="term" value="P:protein autophosphorylation"/>
    <property type="evidence" value="ECO:0000250"/>
    <property type="project" value="UniProtKB"/>
</dbReference>
<dbReference type="GO" id="GO:0006468">
    <property type="term" value="P:protein phosphorylation"/>
    <property type="evidence" value="ECO:0000250"/>
    <property type="project" value="UniProtKB"/>
</dbReference>
<dbReference type="GO" id="GO:0030071">
    <property type="term" value="P:regulation of mitotic metaphase/anaphase transition"/>
    <property type="evidence" value="ECO:0000250"/>
    <property type="project" value="UniProtKB"/>
</dbReference>
<dbReference type="CDD" id="cd08224">
    <property type="entry name" value="STKc_Nek6_7"/>
    <property type="match status" value="1"/>
</dbReference>
<dbReference type="FunFam" id="1.10.510.10:FF:000148">
    <property type="entry name" value="Serine/threonine-protein kinase Nek7"/>
    <property type="match status" value="1"/>
</dbReference>
<dbReference type="FunFam" id="3.30.200.20:FF:000204">
    <property type="entry name" value="Serine/threonine-protein kinase Nek7"/>
    <property type="match status" value="1"/>
</dbReference>
<dbReference type="FunFam" id="3.30.200.20:FF:000240">
    <property type="entry name" value="Serine/threonine-protein kinase Nek7"/>
    <property type="match status" value="1"/>
</dbReference>
<dbReference type="Gene3D" id="3.30.200.20">
    <property type="entry name" value="Phosphorylase Kinase, domain 1"/>
    <property type="match status" value="1"/>
</dbReference>
<dbReference type="Gene3D" id="1.10.510.10">
    <property type="entry name" value="Transferase(Phosphotransferase) domain 1"/>
    <property type="match status" value="1"/>
</dbReference>
<dbReference type="InterPro" id="IPR011009">
    <property type="entry name" value="Kinase-like_dom_sf"/>
</dbReference>
<dbReference type="InterPro" id="IPR000719">
    <property type="entry name" value="Prot_kinase_dom"/>
</dbReference>
<dbReference type="InterPro" id="IPR017441">
    <property type="entry name" value="Protein_kinase_ATP_BS"/>
</dbReference>
<dbReference type="InterPro" id="IPR001245">
    <property type="entry name" value="Ser-Thr/Tyr_kinase_cat_dom"/>
</dbReference>
<dbReference type="InterPro" id="IPR008271">
    <property type="entry name" value="Ser/Thr_kinase_AS"/>
</dbReference>
<dbReference type="PANTHER" id="PTHR43289">
    <property type="entry name" value="MITOGEN-ACTIVATED PROTEIN KINASE KINASE KINASE 20-RELATED"/>
    <property type="match status" value="1"/>
</dbReference>
<dbReference type="PANTHER" id="PTHR43289:SF13">
    <property type="entry name" value="MITOGEN-ACTIVATED PROTEIN KINASE KINASE KINASE 20-RELATED"/>
    <property type="match status" value="1"/>
</dbReference>
<dbReference type="Pfam" id="PF00069">
    <property type="entry name" value="Pkinase"/>
    <property type="match status" value="1"/>
</dbReference>
<dbReference type="PIRSF" id="PIRSF000654">
    <property type="entry name" value="Integrin-linked_kinase"/>
    <property type="match status" value="1"/>
</dbReference>
<dbReference type="PRINTS" id="PR00109">
    <property type="entry name" value="TYRKINASE"/>
</dbReference>
<dbReference type="SMART" id="SM00220">
    <property type="entry name" value="S_TKc"/>
    <property type="match status" value="1"/>
</dbReference>
<dbReference type="SUPFAM" id="SSF56112">
    <property type="entry name" value="Protein kinase-like (PK-like)"/>
    <property type="match status" value="1"/>
</dbReference>
<dbReference type="PROSITE" id="PS00107">
    <property type="entry name" value="PROTEIN_KINASE_ATP"/>
    <property type="match status" value="1"/>
</dbReference>
<dbReference type="PROSITE" id="PS50011">
    <property type="entry name" value="PROTEIN_KINASE_DOM"/>
    <property type="match status" value="1"/>
</dbReference>
<dbReference type="PROSITE" id="PS00108">
    <property type="entry name" value="PROTEIN_KINASE_ST"/>
    <property type="match status" value="1"/>
</dbReference>
<keyword id="KW-0053">Apoptosis</keyword>
<keyword id="KW-0067">ATP-binding</keyword>
<keyword id="KW-0131">Cell cycle</keyword>
<keyword id="KW-0132">Cell division</keyword>
<keyword id="KW-0159">Chromosome partition</keyword>
<keyword id="KW-0963">Cytoplasm</keyword>
<keyword id="KW-0206">Cytoskeleton</keyword>
<keyword id="KW-0418">Kinase</keyword>
<keyword id="KW-0460">Magnesium</keyword>
<keyword id="KW-0479">Metal-binding</keyword>
<keyword id="KW-0498">Mitosis</keyword>
<keyword id="KW-0547">Nucleotide-binding</keyword>
<keyword id="KW-0539">Nucleus</keyword>
<keyword id="KW-0597">Phosphoprotein</keyword>
<keyword id="KW-1185">Reference proteome</keyword>
<keyword id="KW-0723">Serine/threonine-protein kinase</keyword>
<keyword id="KW-0808">Transferase</keyword>
<gene>
    <name type="primary">Nek6</name>
</gene>
<reference key="1">
    <citation type="submission" date="2003-07" db="EMBL/GenBank/DDBJ databases">
        <title>Cloning of Rattus norvegicus NIMA (never in mitosis gene a)-related expressed kinase 6 (Nek6).</title>
        <authorList>
            <person name="Zhou G."/>
            <person name="Zhang Y."/>
            <person name="Ni J."/>
        </authorList>
    </citation>
    <scope>NUCLEOTIDE SEQUENCE [MRNA]</scope>
</reference>
<reference key="2">
    <citation type="journal article" date="2001" name="Curr. Biol.">
        <title>Identification of the NIMA family kinases NEK6/7 as regulators of the p70 ribosomal S6 kinase.</title>
        <authorList>
            <person name="Belham C."/>
            <person name="Comb M.J."/>
            <person name="Avruch J."/>
        </authorList>
    </citation>
    <scope>FUNCTION</scope>
    <scope>CATALYTIC ACTIVITY</scope>
</reference>
<accession>P59895</accession>